<sequence length="305" mass="33592">MLKQRTIKQIVKTVGIGLHSGRKVELTLRPAGPDTGIVFSRVDLATPVDIPASAMAIGDTRLASVLQKDGARVSTIEHLMSACAGLGIDNLYVDVTAEEIPIMDGSAGSFVFLIQSAGIEEQNAAKKFIKVTKPVEIRDGDKFARLDPYFGFKLKFTIDFRHPAVDKTGQALEVDFANTSYVREIARARTFGFAHEVEMMRELGLARGGSMDNAIVLDEYRILNNDGLRYDDEFVKHKMLDAIGDLYVVGHPLLASYTAYKSGHGLNNALLRELLAHEDSYEIVTFDDTQKAPRGFAYETQTAFA</sequence>
<comment type="function">
    <text evidence="1">Catalyzes the hydrolysis of UDP-3-O-myristoyl-N-acetylglucosamine to form UDP-3-O-myristoylglucosamine and acetate, the committed step in lipid A biosynthesis.</text>
</comment>
<comment type="catalytic activity">
    <reaction evidence="1">
        <text>a UDP-3-O-[(3R)-3-hydroxyacyl]-N-acetyl-alpha-D-glucosamine + H2O = a UDP-3-O-[(3R)-3-hydroxyacyl]-alpha-D-glucosamine + acetate</text>
        <dbReference type="Rhea" id="RHEA:67816"/>
        <dbReference type="ChEBI" id="CHEBI:15377"/>
        <dbReference type="ChEBI" id="CHEBI:30089"/>
        <dbReference type="ChEBI" id="CHEBI:137740"/>
        <dbReference type="ChEBI" id="CHEBI:173225"/>
        <dbReference type="EC" id="3.5.1.108"/>
    </reaction>
</comment>
<comment type="cofactor">
    <cofactor evidence="1">
        <name>Zn(2+)</name>
        <dbReference type="ChEBI" id="CHEBI:29105"/>
    </cofactor>
</comment>
<comment type="pathway">
    <text evidence="1">Glycolipid biosynthesis; lipid IV(A) biosynthesis; lipid IV(A) from (3R)-3-hydroxytetradecanoyl-[acyl-carrier-protein] and UDP-N-acetyl-alpha-D-glucosamine: step 2/6.</text>
</comment>
<comment type="similarity">
    <text evidence="1">Belongs to the LpxC family.</text>
</comment>
<name>LPXC_PARXL</name>
<keyword id="KW-0378">Hydrolase</keyword>
<keyword id="KW-0441">Lipid A biosynthesis</keyword>
<keyword id="KW-0444">Lipid biosynthesis</keyword>
<keyword id="KW-0443">Lipid metabolism</keyword>
<keyword id="KW-0479">Metal-binding</keyword>
<keyword id="KW-1185">Reference proteome</keyword>
<keyword id="KW-0862">Zinc</keyword>
<accession>Q13TZ9</accession>
<reference key="1">
    <citation type="journal article" date="2006" name="Proc. Natl. Acad. Sci. U.S.A.">
        <title>Burkholderia xenovorans LB400 harbors a multi-replicon, 9.73-Mbp genome shaped for versatility.</title>
        <authorList>
            <person name="Chain P.S.G."/>
            <person name="Denef V.J."/>
            <person name="Konstantinidis K.T."/>
            <person name="Vergez L.M."/>
            <person name="Agullo L."/>
            <person name="Reyes V.L."/>
            <person name="Hauser L."/>
            <person name="Cordova M."/>
            <person name="Gomez L."/>
            <person name="Gonzalez M."/>
            <person name="Land M."/>
            <person name="Lao V."/>
            <person name="Larimer F."/>
            <person name="LiPuma J.J."/>
            <person name="Mahenthiralingam E."/>
            <person name="Malfatti S.A."/>
            <person name="Marx C.J."/>
            <person name="Parnell J.J."/>
            <person name="Ramette A."/>
            <person name="Richardson P."/>
            <person name="Seeger M."/>
            <person name="Smith D."/>
            <person name="Spilker T."/>
            <person name="Sul W.J."/>
            <person name="Tsoi T.V."/>
            <person name="Ulrich L.E."/>
            <person name="Zhulin I.B."/>
            <person name="Tiedje J.M."/>
        </authorList>
    </citation>
    <scope>NUCLEOTIDE SEQUENCE [LARGE SCALE GENOMIC DNA]</scope>
    <source>
        <strain>LB400</strain>
    </source>
</reference>
<protein>
    <recommendedName>
        <fullName evidence="1">UDP-3-O-acyl-N-acetylglucosamine deacetylase</fullName>
        <shortName evidence="1">UDP-3-O-acyl-GlcNAc deacetylase</shortName>
        <ecNumber evidence="1">3.5.1.108</ecNumber>
    </recommendedName>
    <alternativeName>
        <fullName evidence="1">UDP-3-O-[R-3-hydroxymyristoyl]-N-acetylglucosamine deacetylase</fullName>
    </alternativeName>
</protein>
<dbReference type="EC" id="3.5.1.108" evidence="1"/>
<dbReference type="EMBL" id="CP000270">
    <property type="protein sequence ID" value="ABE32440.1"/>
    <property type="molecule type" value="Genomic_DNA"/>
</dbReference>
<dbReference type="RefSeq" id="WP_007180314.1">
    <property type="nucleotide sequence ID" value="NZ_CP008760.1"/>
</dbReference>
<dbReference type="SMR" id="Q13TZ9"/>
<dbReference type="STRING" id="266265.Bxe_A0493"/>
<dbReference type="KEGG" id="bxb:DR64_2669"/>
<dbReference type="KEGG" id="bxe:Bxe_A0493"/>
<dbReference type="eggNOG" id="COG0774">
    <property type="taxonomic scope" value="Bacteria"/>
</dbReference>
<dbReference type="OrthoDB" id="9802746at2"/>
<dbReference type="UniPathway" id="UPA00359">
    <property type="reaction ID" value="UER00478"/>
</dbReference>
<dbReference type="Proteomes" id="UP000001817">
    <property type="component" value="Chromosome 1"/>
</dbReference>
<dbReference type="GO" id="GO:0016020">
    <property type="term" value="C:membrane"/>
    <property type="evidence" value="ECO:0007669"/>
    <property type="project" value="GOC"/>
</dbReference>
<dbReference type="GO" id="GO:0046872">
    <property type="term" value="F:metal ion binding"/>
    <property type="evidence" value="ECO:0007669"/>
    <property type="project" value="UniProtKB-KW"/>
</dbReference>
<dbReference type="GO" id="GO:0103117">
    <property type="term" value="F:UDP-3-O-acyl-N-acetylglucosamine deacetylase activity"/>
    <property type="evidence" value="ECO:0007669"/>
    <property type="project" value="UniProtKB-UniRule"/>
</dbReference>
<dbReference type="GO" id="GO:0009245">
    <property type="term" value="P:lipid A biosynthetic process"/>
    <property type="evidence" value="ECO:0007669"/>
    <property type="project" value="UniProtKB-UniRule"/>
</dbReference>
<dbReference type="Gene3D" id="3.30.230.20">
    <property type="entry name" value="lpxc deacetylase, domain 1"/>
    <property type="match status" value="1"/>
</dbReference>
<dbReference type="Gene3D" id="3.30.1700.10">
    <property type="entry name" value="lpxc deacetylase, domain 2"/>
    <property type="match status" value="1"/>
</dbReference>
<dbReference type="HAMAP" id="MF_00388">
    <property type="entry name" value="LpxC"/>
    <property type="match status" value="1"/>
</dbReference>
<dbReference type="InterPro" id="IPR020568">
    <property type="entry name" value="Ribosomal_Su5_D2-typ_SF"/>
</dbReference>
<dbReference type="InterPro" id="IPR004463">
    <property type="entry name" value="UDP-acyl_GlcNac_deAcase"/>
</dbReference>
<dbReference type="InterPro" id="IPR011334">
    <property type="entry name" value="UDP-acyl_GlcNac_deAcase_C"/>
</dbReference>
<dbReference type="InterPro" id="IPR015870">
    <property type="entry name" value="UDP-acyl_N-AcGlcN_deAcase_N"/>
</dbReference>
<dbReference type="NCBIfam" id="TIGR00325">
    <property type="entry name" value="lpxC"/>
    <property type="match status" value="1"/>
</dbReference>
<dbReference type="PANTHER" id="PTHR33694">
    <property type="entry name" value="UDP-3-O-ACYL-N-ACETYLGLUCOSAMINE DEACETYLASE 1, MITOCHONDRIAL-RELATED"/>
    <property type="match status" value="1"/>
</dbReference>
<dbReference type="PANTHER" id="PTHR33694:SF1">
    <property type="entry name" value="UDP-3-O-ACYL-N-ACETYLGLUCOSAMINE DEACETYLASE 1, MITOCHONDRIAL-RELATED"/>
    <property type="match status" value="1"/>
</dbReference>
<dbReference type="Pfam" id="PF03331">
    <property type="entry name" value="LpxC"/>
    <property type="match status" value="1"/>
</dbReference>
<dbReference type="SUPFAM" id="SSF54211">
    <property type="entry name" value="Ribosomal protein S5 domain 2-like"/>
    <property type="match status" value="2"/>
</dbReference>
<evidence type="ECO:0000255" key="1">
    <source>
        <dbReference type="HAMAP-Rule" id="MF_00388"/>
    </source>
</evidence>
<gene>
    <name evidence="1" type="primary">lpxC</name>
    <name type="ordered locus">Bxeno_A3902</name>
    <name type="ORF">Bxe_A0493</name>
</gene>
<feature type="chain" id="PRO_0000253656" description="UDP-3-O-acyl-N-acetylglucosamine deacetylase">
    <location>
        <begin position="1"/>
        <end position="305"/>
    </location>
</feature>
<feature type="active site" description="Proton donor" evidence="1">
    <location>
        <position position="264"/>
    </location>
</feature>
<feature type="binding site" evidence="1">
    <location>
        <position position="78"/>
    </location>
    <ligand>
        <name>Zn(2+)</name>
        <dbReference type="ChEBI" id="CHEBI:29105"/>
    </ligand>
</feature>
<feature type="binding site" evidence="1">
    <location>
        <position position="237"/>
    </location>
    <ligand>
        <name>Zn(2+)</name>
        <dbReference type="ChEBI" id="CHEBI:29105"/>
    </ligand>
</feature>
<feature type="binding site" evidence="1">
    <location>
        <position position="241"/>
    </location>
    <ligand>
        <name>Zn(2+)</name>
        <dbReference type="ChEBI" id="CHEBI:29105"/>
    </ligand>
</feature>
<proteinExistence type="inferred from homology"/>
<organism>
    <name type="scientific">Paraburkholderia xenovorans (strain LB400)</name>
    <dbReference type="NCBI Taxonomy" id="266265"/>
    <lineage>
        <taxon>Bacteria</taxon>
        <taxon>Pseudomonadati</taxon>
        <taxon>Pseudomonadota</taxon>
        <taxon>Betaproteobacteria</taxon>
        <taxon>Burkholderiales</taxon>
        <taxon>Burkholderiaceae</taxon>
        <taxon>Paraburkholderia</taxon>
    </lineage>
</organism>